<sequence>MAFLCSSLPSSSSIAIFGDPNTDGSSRSYLSIPSLKLRFRPVAASSHICAPAIDKSTFVISESVSEDELWAAACLRVRTFNELNPSAYNIQDHRRYLAEREFEALKERTSGKREGFTRVACINATLPLSQLSSSFEDLCSACKFSDGIEDRVVVGSLDLNQCRWLPDEIAGTKPEGIGVDFARAYLSNVCVAKELHRNGVGYKLIDKSKRVAGEWGITDMYVHVTVDNEAAKSLYMKSGFEQETAEPAWQARYLNRPQRLLLWLALPTSPIMSM</sequence>
<feature type="transit peptide" description="Chloroplast" evidence="3">
    <location>
        <begin position="1"/>
        <end position="65"/>
    </location>
</feature>
<feature type="chain" id="PRO_0000457956" description="GCN5-related N-acetyltransferase 7, chloroplastic">
    <location>
        <begin position="66"/>
        <end position="274"/>
    </location>
</feature>
<feature type="domain" description="N-acetyltransferase" evidence="4">
    <location>
        <begin position="75"/>
        <end position="267"/>
    </location>
</feature>
<feature type="active site" description="Proton donor" evidence="2">
    <location>
        <position position="235"/>
    </location>
</feature>
<feature type="binding site" evidence="2">
    <location>
        <begin position="189"/>
        <end position="191"/>
    </location>
    <ligand>
        <name>acetyl-CoA</name>
        <dbReference type="ChEBI" id="CHEBI:57288"/>
    </ligand>
</feature>
<feature type="binding site" evidence="2">
    <location>
        <begin position="197"/>
        <end position="202"/>
    </location>
    <ligand>
        <name>acetyl-CoA</name>
        <dbReference type="ChEBI" id="CHEBI:57288"/>
    </ligand>
</feature>
<feature type="binding site" evidence="2">
    <location>
        <begin position="228"/>
        <end position="230"/>
    </location>
    <ligand>
        <name>acetyl-CoA</name>
        <dbReference type="ChEBI" id="CHEBI:57288"/>
    </ligand>
</feature>
<feature type="binding site" evidence="2">
    <location>
        <position position="235"/>
    </location>
    <ligand>
        <name>acetyl-CoA</name>
        <dbReference type="ChEBI" id="CHEBI:57288"/>
    </ligand>
</feature>
<feature type="splice variant" id="VSP_061874" description="In isoform 2.">
    <location>
        <begin position="216"/>
        <end position="226"/>
    </location>
</feature>
<feature type="sequence conflict" description="In Ref. 5; AAM61296." evidence="7" ref="5">
    <original>F</original>
    <variation>S</variation>
    <location>
        <position position="135"/>
    </location>
</feature>
<evidence type="ECO:0000250" key="1">
    <source>
        <dbReference type="UniProtKB" id="Q7X9V3"/>
    </source>
</evidence>
<evidence type="ECO:0000250" key="2">
    <source>
        <dbReference type="UniProtKB" id="Q96F10"/>
    </source>
</evidence>
<evidence type="ECO:0000255" key="3"/>
<evidence type="ECO:0000255" key="4">
    <source>
        <dbReference type="PROSITE-ProRule" id="PRU00532"/>
    </source>
</evidence>
<evidence type="ECO:0000269" key="5">
    <source>
    </source>
</evidence>
<evidence type="ECO:0000303" key="6">
    <source>
    </source>
</evidence>
<evidence type="ECO:0000305" key="7"/>
<evidence type="ECO:0000312" key="8">
    <source>
        <dbReference type="Araport" id="AT4G28030"/>
    </source>
</evidence>
<evidence type="ECO:0000312" key="9">
    <source>
        <dbReference type="EMBL" id="CAB36772.1"/>
    </source>
</evidence>
<proteinExistence type="evidence at protein level"/>
<protein>
    <recommendedName>
        <fullName evidence="6">GCN5-related N-acetyltransferase 7, chloroplastic</fullName>
        <ecNumber evidence="4 5">2.3.1.255</ecNumber>
        <ecNumber evidence="4 5">2.3.1.48</ecNumber>
    </recommendedName>
</protein>
<reference key="1">
    <citation type="journal article" date="1999" name="Nature">
        <title>Sequence and analysis of chromosome 4 of the plant Arabidopsis thaliana.</title>
        <authorList>
            <person name="Mayer K.F.X."/>
            <person name="Schueller C."/>
            <person name="Wambutt R."/>
            <person name="Murphy G."/>
            <person name="Volckaert G."/>
            <person name="Pohl T."/>
            <person name="Duesterhoeft A."/>
            <person name="Stiekema W."/>
            <person name="Entian K.-D."/>
            <person name="Terryn N."/>
            <person name="Harris B."/>
            <person name="Ansorge W."/>
            <person name="Brandt P."/>
            <person name="Grivell L.A."/>
            <person name="Rieger M."/>
            <person name="Weichselgartner M."/>
            <person name="de Simone V."/>
            <person name="Obermaier B."/>
            <person name="Mache R."/>
            <person name="Mueller M."/>
            <person name="Kreis M."/>
            <person name="Delseny M."/>
            <person name="Puigdomenech P."/>
            <person name="Watson M."/>
            <person name="Schmidtheini T."/>
            <person name="Reichert B."/>
            <person name="Portetelle D."/>
            <person name="Perez-Alonso M."/>
            <person name="Boutry M."/>
            <person name="Bancroft I."/>
            <person name="Vos P."/>
            <person name="Hoheisel J."/>
            <person name="Zimmermann W."/>
            <person name="Wedler H."/>
            <person name="Ridley P."/>
            <person name="Langham S.-A."/>
            <person name="McCullagh B."/>
            <person name="Bilham L."/>
            <person name="Robben J."/>
            <person name="van der Schueren J."/>
            <person name="Grymonprez B."/>
            <person name="Chuang Y.-J."/>
            <person name="Vandenbussche F."/>
            <person name="Braeken M."/>
            <person name="Weltjens I."/>
            <person name="Voet M."/>
            <person name="Bastiaens I."/>
            <person name="Aert R."/>
            <person name="Defoor E."/>
            <person name="Weitzenegger T."/>
            <person name="Bothe G."/>
            <person name="Ramsperger U."/>
            <person name="Hilbert H."/>
            <person name="Braun M."/>
            <person name="Holzer E."/>
            <person name="Brandt A."/>
            <person name="Peters S."/>
            <person name="van Staveren M."/>
            <person name="Dirkse W."/>
            <person name="Mooijman P."/>
            <person name="Klein Lankhorst R."/>
            <person name="Rose M."/>
            <person name="Hauf J."/>
            <person name="Koetter P."/>
            <person name="Berneiser S."/>
            <person name="Hempel S."/>
            <person name="Feldpausch M."/>
            <person name="Lamberth S."/>
            <person name="Van den Daele H."/>
            <person name="De Keyser A."/>
            <person name="Buysshaert C."/>
            <person name="Gielen J."/>
            <person name="Villarroel R."/>
            <person name="De Clercq R."/>
            <person name="van Montagu M."/>
            <person name="Rogers J."/>
            <person name="Cronin A."/>
            <person name="Quail M.A."/>
            <person name="Bray-Allen S."/>
            <person name="Clark L."/>
            <person name="Doggett J."/>
            <person name="Hall S."/>
            <person name="Kay M."/>
            <person name="Lennard N."/>
            <person name="McLay K."/>
            <person name="Mayes R."/>
            <person name="Pettett A."/>
            <person name="Rajandream M.A."/>
            <person name="Lyne M."/>
            <person name="Benes V."/>
            <person name="Rechmann S."/>
            <person name="Borkova D."/>
            <person name="Bloecker H."/>
            <person name="Scharfe M."/>
            <person name="Grimm M."/>
            <person name="Loehnert T.-H."/>
            <person name="Dose S."/>
            <person name="de Haan M."/>
            <person name="Maarse A.C."/>
            <person name="Schaefer M."/>
            <person name="Mueller-Auer S."/>
            <person name="Gabel C."/>
            <person name="Fuchs M."/>
            <person name="Fartmann B."/>
            <person name="Granderath K."/>
            <person name="Dauner D."/>
            <person name="Herzl A."/>
            <person name="Neumann S."/>
            <person name="Argiriou A."/>
            <person name="Vitale D."/>
            <person name="Liguori R."/>
            <person name="Piravandi E."/>
            <person name="Massenet O."/>
            <person name="Quigley F."/>
            <person name="Clabauld G."/>
            <person name="Muendlein A."/>
            <person name="Felber R."/>
            <person name="Schnabl S."/>
            <person name="Hiller R."/>
            <person name="Schmidt W."/>
            <person name="Lecharny A."/>
            <person name="Aubourg S."/>
            <person name="Chefdor F."/>
            <person name="Cooke R."/>
            <person name="Berger C."/>
            <person name="Monfort A."/>
            <person name="Casacuberta E."/>
            <person name="Gibbons T."/>
            <person name="Weber N."/>
            <person name="Vandenbol M."/>
            <person name="Bargues M."/>
            <person name="Terol J."/>
            <person name="Torres A."/>
            <person name="Perez-Perez A."/>
            <person name="Purnelle B."/>
            <person name="Bent E."/>
            <person name="Johnson S."/>
            <person name="Tacon D."/>
            <person name="Jesse T."/>
            <person name="Heijnen L."/>
            <person name="Schwarz S."/>
            <person name="Scholler P."/>
            <person name="Heber S."/>
            <person name="Francs P."/>
            <person name="Bielke C."/>
            <person name="Frishman D."/>
            <person name="Haase D."/>
            <person name="Lemcke K."/>
            <person name="Mewes H.-W."/>
            <person name="Stocker S."/>
            <person name="Zaccaria P."/>
            <person name="Bevan M."/>
            <person name="Wilson R.K."/>
            <person name="de la Bastide M."/>
            <person name="Habermann K."/>
            <person name="Parnell L."/>
            <person name="Dedhia N."/>
            <person name="Gnoj L."/>
            <person name="Schutz K."/>
            <person name="Huang E."/>
            <person name="Spiegel L."/>
            <person name="Sekhon M."/>
            <person name="Murray J."/>
            <person name="Sheet P."/>
            <person name="Cordes M."/>
            <person name="Abu-Threideh J."/>
            <person name="Stoneking T."/>
            <person name="Kalicki J."/>
            <person name="Graves T."/>
            <person name="Harmon G."/>
            <person name="Edwards J."/>
            <person name="Latreille P."/>
            <person name="Courtney L."/>
            <person name="Cloud J."/>
            <person name="Abbott A."/>
            <person name="Scott K."/>
            <person name="Johnson D."/>
            <person name="Minx P."/>
            <person name="Bentley D."/>
            <person name="Fulton B."/>
            <person name="Miller N."/>
            <person name="Greco T."/>
            <person name="Kemp K."/>
            <person name="Kramer J."/>
            <person name="Fulton L."/>
            <person name="Mardis E."/>
            <person name="Dante M."/>
            <person name="Pepin K."/>
            <person name="Hillier L.W."/>
            <person name="Nelson J."/>
            <person name="Spieth J."/>
            <person name="Ryan E."/>
            <person name="Andrews S."/>
            <person name="Geisel C."/>
            <person name="Layman D."/>
            <person name="Du H."/>
            <person name="Ali J."/>
            <person name="Berghoff A."/>
            <person name="Jones K."/>
            <person name="Drone K."/>
            <person name="Cotton M."/>
            <person name="Joshu C."/>
            <person name="Antonoiu B."/>
            <person name="Zidanic M."/>
            <person name="Strong C."/>
            <person name="Sun H."/>
            <person name="Lamar B."/>
            <person name="Yordan C."/>
            <person name="Ma P."/>
            <person name="Zhong J."/>
            <person name="Preston R."/>
            <person name="Vil D."/>
            <person name="Shekher M."/>
            <person name="Matero A."/>
            <person name="Shah R."/>
            <person name="Swaby I.K."/>
            <person name="O'Shaughnessy A."/>
            <person name="Rodriguez M."/>
            <person name="Hoffman J."/>
            <person name="Till S."/>
            <person name="Granat S."/>
            <person name="Shohdy N."/>
            <person name="Hasegawa A."/>
            <person name="Hameed A."/>
            <person name="Lodhi M."/>
            <person name="Johnson A."/>
            <person name="Chen E."/>
            <person name="Marra M.A."/>
            <person name="Martienssen R."/>
            <person name="McCombie W.R."/>
        </authorList>
    </citation>
    <scope>NUCLEOTIDE SEQUENCE [LARGE SCALE GENOMIC DNA]</scope>
    <source>
        <strain>cv. Columbia</strain>
    </source>
</reference>
<reference key="2">
    <citation type="journal article" date="2017" name="Plant J.">
        <title>Araport11: a complete reannotation of the Arabidopsis thaliana reference genome.</title>
        <authorList>
            <person name="Cheng C.Y."/>
            <person name="Krishnakumar V."/>
            <person name="Chan A.P."/>
            <person name="Thibaud-Nissen F."/>
            <person name="Schobel S."/>
            <person name="Town C.D."/>
        </authorList>
    </citation>
    <scope>GENOME REANNOTATION</scope>
    <source>
        <strain>cv. Columbia</strain>
    </source>
</reference>
<reference key="3">
    <citation type="journal article" date="2003" name="Science">
        <title>Empirical analysis of transcriptional activity in the Arabidopsis genome.</title>
        <authorList>
            <person name="Yamada K."/>
            <person name="Lim J."/>
            <person name="Dale J.M."/>
            <person name="Chen H."/>
            <person name="Shinn P."/>
            <person name="Palm C.J."/>
            <person name="Southwick A.M."/>
            <person name="Wu H.C."/>
            <person name="Kim C.J."/>
            <person name="Nguyen M."/>
            <person name="Pham P.K."/>
            <person name="Cheuk R.F."/>
            <person name="Karlin-Newmann G."/>
            <person name="Liu S.X."/>
            <person name="Lam B."/>
            <person name="Sakano H."/>
            <person name="Wu T."/>
            <person name="Yu G."/>
            <person name="Miranda M."/>
            <person name="Quach H.L."/>
            <person name="Tripp M."/>
            <person name="Chang C.H."/>
            <person name="Lee J.M."/>
            <person name="Toriumi M.J."/>
            <person name="Chan M.M."/>
            <person name="Tang C.C."/>
            <person name="Onodera C.S."/>
            <person name="Deng J.M."/>
            <person name="Akiyama K."/>
            <person name="Ansari Y."/>
            <person name="Arakawa T."/>
            <person name="Banh J."/>
            <person name="Banno F."/>
            <person name="Bowser L."/>
            <person name="Brooks S.Y."/>
            <person name="Carninci P."/>
            <person name="Chao Q."/>
            <person name="Choy N."/>
            <person name="Enju A."/>
            <person name="Goldsmith A.D."/>
            <person name="Gurjal M."/>
            <person name="Hansen N.F."/>
            <person name="Hayashizaki Y."/>
            <person name="Johnson-Hopson C."/>
            <person name="Hsuan V.W."/>
            <person name="Iida K."/>
            <person name="Karnes M."/>
            <person name="Khan S."/>
            <person name="Koesema E."/>
            <person name="Ishida J."/>
            <person name="Jiang P.X."/>
            <person name="Jones T."/>
            <person name="Kawai J."/>
            <person name="Kamiya A."/>
            <person name="Meyers C."/>
            <person name="Nakajima M."/>
            <person name="Narusaka M."/>
            <person name="Seki M."/>
            <person name="Sakurai T."/>
            <person name="Satou M."/>
            <person name="Tamse R."/>
            <person name="Vaysberg M."/>
            <person name="Wallender E.K."/>
            <person name="Wong C."/>
            <person name="Yamamura Y."/>
            <person name="Yuan S."/>
            <person name="Shinozaki K."/>
            <person name="Davis R.W."/>
            <person name="Theologis A."/>
            <person name="Ecker J.R."/>
        </authorList>
    </citation>
    <scope>NUCLEOTIDE SEQUENCE [LARGE SCALE MRNA] (ISOFORM 1)</scope>
    <source>
        <strain>cv. Columbia</strain>
    </source>
</reference>
<reference key="4">
    <citation type="journal article" date="2009" name="DNA Res.">
        <title>Analysis of multiple occurrences of alternative splicing events in Arabidopsis thaliana using novel sequenced full-length cDNAs.</title>
        <authorList>
            <person name="Iida K."/>
            <person name="Fukami-Kobayashi K."/>
            <person name="Toyoda A."/>
            <person name="Sakaki Y."/>
            <person name="Kobayashi M."/>
            <person name="Seki M."/>
            <person name="Shinozaki K."/>
        </authorList>
    </citation>
    <scope>NUCLEOTIDE SEQUENCE [LARGE SCALE MRNA] (ISOFORM 2)</scope>
    <source>
        <strain>cv. Columbia</strain>
        <tissue>Rosette leaf</tissue>
    </source>
</reference>
<reference key="5">
    <citation type="submission" date="2002-03" db="EMBL/GenBank/DDBJ databases">
        <title>Full-length cDNA from Arabidopsis thaliana.</title>
        <authorList>
            <person name="Brover V.V."/>
            <person name="Troukhan M.E."/>
            <person name="Alexandrov N.A."/>
            <person name="Lu Y.-P."/>
            <person name="Flavell R.B."/>
            <person name="Feldmann K.A."/>
        </authorList>
    </citation>
    <scope>NUCLEOTIDE SEQUENCE [LARGE SCALE MRNA] (ISOFORM 1)</scope>
</reference>
<reference key="6">
    <citation type="journal article" date="2020" name="Mol. Syst. Biol.">
        <title>Dual lysine and N-terminal acetyltransferases reveal the complexity underpinning protein acetylation.</title>
        <authorList>
            <person name="Bienvenut W.V."/>
            <person name="Bruenje A."/>
            <person name="Boyer J.-B."/>
            <person name="Muehlenbeck J.S."/>
            <person name="Bernal G."/>
            <person name="Lassowskat I."/>
            <person name="Dian C."/>
            <person name="Linster E."/>
            <person name="Dinh T.V."/>
            <person name="Koskela M.M."/>
            <person name="Jung V."/>
            <person name="Seidel J."/>
            <person name="Schyrba L.K."/>
            <person name="Ivanauskaite A."/>
            <person name="Eirich J."/>
            <person name="Hell R."/>
            <person name="Schwarzer D."/>
            <person name="Mulo P."/>
            <person name="Wirtz M."/>
            <person name="Meinnel T."/>
            <person name="Giglione C."/>
            <person name="Finkemeier I."/>
        </authorList>
    </citation>
    <scope>FUNCTION</scope>
    <scope>CATALYTIC ACTIVITY</scope>
    <scope>SUBCELLULAR LOCATION</scope>
    <scope>TISSUE SPECIFICITY</scope>
    <scope>AUTOACETYLATION</scope>
    <scope>GENE FAMILY</scope>
    <scope>NOMENCLATURE</scope>
    <source>
        <strain>cv. Columbia</strain>
    </source>
</reference>
<name>GNAT7_ARATH</name>
<accession>Q94AC8</accession>
<accession>B9DG63</accession>
<accession>Q8LFP5</accession>
<accession>Q9SUD6</accession>
<organism>
    <name type="scientific">Arabidopsis thaliana</name>
    <name type="common">Mouse-ear cress</name>
    <dbReference type="NCBI Taxonomy" id="3702"/>
    <lineage>
        <taxon>Eukaryota</taxon>
        <taxon>Viridiplantae</taxon>
        <taxon>Streptophyta</taxon>
        <taxon>Embryophyta</taxon>
        <taxon>Tracheophyta</taxon>
        <taxon>Spermatophyta</taxon>
        <taxon>Magnoliopsida</taxon>
        <taxon>eudicotyledons</taxon>
        <taxon>Gunneridae</taxon>
        <taxon>Pentapetalae</taxon>
        <taxon>rosids</taxon>
        <taxon>malvids</taxon>
        <taxon>Brassicales</taxon>
        <taxon>Brassicaceae</taxon>
        <taxon>Camelineae</taxon>
        <taxon>Arabidopsis</taxon>
    </lineage>
</organism>
<keyword id="KW-0025">Alternative splicing</keyword>
<keyword id="KW-0150">Chloroplast</keyword>
<keyword id="KW-0934">Plastid</keyword>
<keyword id="KW-1185">Reference proteome</keyword>
<keyword id="KW-0808">Transferase</keyword>
<keyword id="KW-0809">Transit peptide</keyword>
<dbReference type="EC" id="2.3.1.255" evidence="4 5"/>
<dbReference type="EC" id="2.3.1.48" evidence="4 5"/>
<dbReference type="EMBL" id="AL035524">
    <property type="protein sequence ID" value="CAB36772.1"/>
    <property type="status" value="ALT_SEQ"/>
    <property type="molecule type" value="Genomic_DNA"/>
</dbReference>
<dbReference type="EMBL" id="AL161572">
    <property type="protein sequence ID" value="CAB79605.1"/>
    <property type="status" value="ALT_SEQ"/>
    <property type="molecule type" value="Genomic_DNA"/>
</dbReference>
<dbReference type="EMBL" id="CP002687">
    <property type="protein sequence ID" value="AEE85424.1"/>
    <property type="molecule type" value="Genomic_DNA"/>
</dbReference>
<dbReference type="EMBL" id="CP002687">
    <property type="protein sequence ID" value="AEE85425.1"/>
    <property type="molecule type" value="Genomic_DNA"/>
</dbReference>
<dbReference type="EMBL" id="AY048278">
    <property type="protein sequence ID" value="AAK82540.1"/>
    <property type="molecule type" value="mRNA"/>
</dbReference>
<dbReference type="EMBL" id="AY133564">
    <property type="protein sequence ID" value="AAM91394.1"/>
    <property type="molecule type" value="mRNA"/>
</dbReference>
<dbReference type="EMBL" id="AK317037">
    <property type="protein sequence ID" value="BAH19730.1"/>
    <property type="molecule type" value="mRNA"/>
</dbReference>
<dbReference type="EMBL" id="AY084722">
    <property type="protein sequence ID" value="AAM61296.1"/>
    <property type="molecule type" value="mRNA"/>
</dbReference>
<dbReference type="PIR" id="T02904">
    <property type="entry name" value="T02904"/>
</dbReference>
<dbReference type="RefSeq" id="NP_001031734.1">
    <molecule id="Q94AC8-2"/>
    <property type="nucleotide sequence ID" value="NM_001036657.1"/>
</dbReference>
<dbReference type="RefSeq" id="NP_567795.1">
    <molecule id="Q94AC8-1"/>
    <property type="nucleotide sequence ID" value="NM_118942.4"/>
</dbReference>
<dbReference type="SMR" id="Q94AC8"/>
<dbReference type="FunCoup" id="Q94AC8">
    <property type="interactions" value="1271"/>
</dbReference>
<dbReference type="STRING" id="3702.Q94AC8"/>
<dbReference type="iPTMnet" id="Q94AC8"/>
<dbReference type="PaxDb" id="3702-AT4G28030.1"/>
<dbReference type="ProteomicsDB" id="179412"/>
<dbReference type="ProteomicsDB" id="179500"/>
<dbReference type="EnsemblPlants" id="AT4G28030.1">
    <molecule id="Q94AC8-1"/>
    <property type="protein sequence ID" value="AT4G28030.1"/>
    <property type="gene ID" value="AT4G28030"/>
</dbReference>
<dbReference type="EnsemblPlants" id="AT4G28030.2">
    <molecule id="Q94AC8-2"/>
    <property type="protein sequence ID" value="AT4G28030.2"/>
    <property type="gene ID" value="AT4G28030"/>
</dbReference>
<dbReference type="GeneID" id="828918"/>
<dbReference type="Gramene" id="AT4G28030.1">
    <molecule id="Q94AC8-1"/>
    <property type="protein sequence ID" value="AT4G28030.1"/>
    <property type="gene ID" value="AT4G28030"/>
</dbReference>
<dbReference type="Gramene" id="AT4G28030.2">
    <molecule id="Q94AC8-2"/>
    <property type="protein sequence ID" value="AT4G28030.2"/>
    <property type="gene ID" value="AT4G28030"/>
</dbReference>
<dbReference type="KEGG" id="ath:AT4G28030"/>
<dbReference type="Araport" id="AT4G28030"/>
<dbReference type="TAIR" id="AT4G28030"/>
<dbReference type="eggNOG" id="ENOG502QVM2">
    <property type="taxonomic scope" value="Eukaryota"/>
</dbReference>
<dbReference type="HOGENOM" id="CLU_083471_1_0_1"/>
<dbReference type="InParanoid" id="Q94AC8"/>
<dbReference type="OMA" id="TGMKPEG"/>
<dbReference type="PRO" id="PR:Q94AC8"/>
<dbReference type="Proteomes" id="UP000006548">
    <property type="component" value="Chromosome 4"/>
</dbReference>
<dbReference type="ExpressionAtlas" id="Q94AC8">
    <property type="expression patterns" value="baseline and differential"/>
</dbReference>
<dbReference type="GO" id="GO:0009507">
    <property type="term" value="C:chloroplast"/>
    <property type="evidence" value="ECO:0000314"/>
    <property type="project" value="TAIR"/>
</dbReference>
<dbReference type="GO" id="GO:0008080">
    <property type="term" value="F:N-acetyltransferase activity"/>
    <property type="evidence" value="ECO:0000314"/>
    <property type="project" value="UniProtKB"/>
</dbReference>
<dbReference type="GO" id="GO:0006474">
    <property type="term" value="P:N-terminal protein amino acid acetylation"/>
    <property type="evidence" value="ECO:0000314"/>
    <property type="project" value="UniProtKB"/>
</dbReference>
<dbReference type="GO" id="GO:0018394">
    <property type="term" value="P:peptidyl-lysine acetylation"/>
    <property type="evidence" value="ECO:0000314"/>
    <property type="project" value="UniProtKB"/>
</dbReference>
<dbReference type="CDD" id="cd04301">
    <property type="entry name" value="NAT_SF"/>
    <property type="match status" value="1"/>
</dbReference>
<dbReference type="FunFam" id="3.40.630.30:FF:000162">
    <property type="entry name" value="AT4g28030/T13J8_140"/>
    <property type="match status" value="1"/>
</dbReference>
<dbReference type="Gene3D" id="3.40.630.30">
    <property type="match status" value="1"/>
</dbReference>
<dbReference type="InterPro" id="IPR016181">
    <property type="entry name" value="Acyl_CoA_acyltransferase"/>
</dbReference>
<dbReference type="InterPro" id="IPR000182">
    <property type="entry name" value="GNAT_dom"/>
</dbReference>
<dbReference type="PANTHER" id="PTHR47876:SF2">
    <property type="entry name" value="GCN5-RELATED N-ACETYLTRANSFERASE 7, CHLOROPLASTIC"/>
    <property type="match status" value="1"/>
</dbReference>
<dbReference type="PANTHER" id="PTHR47876">
    <property type="entry name" value="OS08G0260000 PROTEIN"/>
    <property type="match status" value="1"/>
</dbReference>
<dbReference type="Pfam" id="PF00583">
    <property type="entry name" value="Acetyltransf_1"/>
    <property type="match status" value="1"/>
</dbReference>
<dbReference type="SUPFAM" id="SSF55729">
    <property type="entry name" value="Acyl-CoA N-acyltransferases (Nat)"/>
    <property type="match status" value="1"/>
</dbReference>
<dbReference type="PROSITE" id="PS51186">
    <property type="entry name" value="GNAT"/>
    <property type="match status" value="1"/>
</dbReference>
<comment type="function">
    <text evidence="5">Protein acetyltransferase with dual specificity triggering both N-alpha-acetylation (NTA), with a large spectrum of modified N-termini, including methionine, alanine, serine, threonine and to a lower extent valine and proline as substrates, and epsilon-lysine acetylation (KA).</text>
</comment>
<comment type="catalytic activity">
    <reaction evidence="5">
        <text>an N-terminal L-alpha-aminoacyl-[protein] + acetyl-CoA = N-terminal N(alpha)-acetyl-L-alpha-aminoacyl-[protein] + CoA + H(+)</text>
        <dbReference type="Rhea" id="RHEA:21028"/>
        <dbReference type="Rhea" id="RHEA-COMP:10636"/>
        <dbReference type="Rhea" id="RHEA-COMP:15589"/>
        <dbReference type="ChEBI" id="CHEBI:15378"/>
        <dbReference type="ChEBI" id="CHEBI:57287"/>
        <dbReference type="ChEBI" id="CHEBI:57288"/>
        <dbReference type="ChEBI" id="CHEBI:78597"/>
        <dbReference type="ChEBI" id="CHEBI:78598"/>
    </reaction>
</comment>
<comment type="catalytic activity">
    <reaction evidence="5">
        <text>L-lysyl-[protein] + acetyl-CoA = N(6)-acetyl-L-lysyl-[protein] + CoA + H(+)</text>
        <dbReference type="Rhea" id="RHEA:45948"/>
        <dbReference type="Rhea" id="RHEA-COMP:9752"/>
        <dbReference type="Rhea" id="RHEA-COMP:10731"/>
        <dbReference type="ChEBI" id="CHEBI:15378"/>
        <dbReference type="ChEBI" id="CHEBI:29969"/>
        <dbReference type="ChEBI" id="CHEBI:57287"/>
        <dbReference type="ChEBI" id="CHEBI:57288"/>
        <dbReference type="ChEBI" id="CHEBI:61930"/>
        <dbReference type="EC" id="2.3.1.48"/>
    </reaction>
</comment>
<comment type="catalytic activity">
    <reaction evidence="5">
        <text>N-terminal L-alanyl-[protein] + acetyl-CoA = N-terminal N(alpha)-acetyl-L-alanyl-[protein] + CoA + H(+)</text>
        <dbReference type="Rhea" id="RHEA:50500"/>
        <dbReference type="Rhea" id="RHEA-COMP:12701"/>
        <dbReference type="Rhea" id="RHEA-COMP:12702"/>
        <dbReference type="ChEBI" id="CHEBI:15378"/>
        <dbReference type="ChEBI" id="CHEBI:57287"/>
        <dbReference type="ChEBI" id="CHEBI:57288"/>
        <dbReference type="ChEBI" id="CHEBI:64718"/>
        <dbReference type="ChEBI" id="CHEBI:83683"/>
        <dbReference type="EC" id="2.3.1.255"/>
    </reaction>
</comment>
<comment type="catalytic activity">
    <reaction evidence="5">
        <text>N-terminal L-seryl-[protein] + acetyl-CoA = N-terminal N(alpha)-acetyl-L-seryl-[protein] + CoA + H(+)</text>
        <dbReference type="Rhea" id="RHEA:50504"/>
        <dbReference type="Rhea" id="RHEA-COMP:12703"/>
        <dbReference type="Rhea" id="RHEA-COMP:12704"/>
        <dbReference type="ChEBI" id="CHEBI:15378"/>
        <dbReference type="ChEBI" id="CHEBI:57287"/>
        <dbReference type="ChEBI" id="CHEBI:57288"/>
        <dbReference type="ChEBI" id="CHEBI:64738"/>
        <dbReference type="ChEBI" id="CHEBI:83690"/>
        <dbReference type="EC" id="2.3.1.255"/>
    </reaction>
</comment>
<comment type="catalytic activity">
    <reaction evidence="5">
        <text>N-terminal L-threonyl-[protein] + acetyl-CoA = N-terminal N(alpha)-acetyl-L-threonyl-[protein] + CoA + H(+)</text>
        <dbReference type="Rhea" id="RHEA:50516"/>
        <dbReference type="Rhea" id="RHEA-COMP:12709"/>
        <dbReference type="Rhea" id="RHEA-COMP:12710"/>
        <dbReference type="ChEBI" id="CHEBI:15378"/>
        <dbReference type="ChEBI" id="CHEBI:57287"/>
        <dbReference type="ChEBI" id="CHEBI:57288"/>
        <dbReference type="ChEBI" id="CHEBI:64739"/>
        <dbReference type="ChEBI" id="CHEBI:133375"/>
        <dbReference type="EC" id="2.3.1.255"/>
    </reaction>
</comment>
<comment type="catalytic activity">
    <reaction evidence="5">
        <text>N-terminal L-methionyl-[protein] + acetyl-CoA = N-terminal N(alpha)-acetyl-L-methionyl-[protein] + CoA + H(+)</text>
        <dbReference type="Rhea" id="RHEA:75239"/>
        <dbReference type="Rhea" id="RHEA-COMP:18493"/>
        <dbReference type="Rhea" id="RHEA-COMP:18494"/>
        <dbReference type="ChEBI" id="CHEBI:15378"/>
        <dbReference type="ChEBI" id="CHEBI:57287"/>
        <dbReference type="ChEBI" id="CHEBI:57288"/>
        <dbReference type="ChEBI" id="CHEBI:64731"/>
        <dbReference type="ChEBI" id="CHEBI:133414"/>
    </reaction>
</comment>
<comment type="catalytic activity">
    <reaction evidence="5">
        <text>N-terminal L-prolyl-[protein] + acetyl-CoA = N-terminal N(alpha)-acetyl-L-prolyl-[protein] + CoA + H(+)</text>
        <dbReference type="Rhea" id="RHEA:75247"/>
        <dbReference type="Rhea" id="RHEA-COMP:18495"/>
        <dbReference type="Rhea" id="RHEA-COMP:18496"/>
        <dbReference type="ChEBI" id="CHEBI:15378"/>
        <dbReference type="ChEBI" id="CHEBI:57287"/>
        <dbReference type="ChEBI" id="CHEBI:57288"/>
        <dbReference type="ChEBI" id="CHEBI:65251"/>
        <dbReference type="ChEBI" id="CHEBI:140859"/>
    </reaction>
</comment>
<comment type="catalytic activity">
    <reaction evidence="5">
        <text>N-terminal L-valyl-[protein] + acetyl-CoA = N-terminal N(alpha)-acetyl-L-valyl-[protein] + CoA + H(+)</text>
        <dbReference type="Rhea" id="RHEA:50508"/>
        <dbReference type="Rhea" id="RHEA-COMP:12705"/>
        <dbReference type="Rhea" id="RHEA-COMP:12706"/>
        <dbReference type="ChEBI" id="CHEBI:15378"/>
        <dbReference type="ChEBI" id="CHEBI:57287"/>
        <dbReference type="ChEBI" id="CHEBI:57288"/>
        <dbReference type="ChEBI" id="CHEBI:64741"/>
        <dbReference type="ChEBI" id="CHEBI:133371"/>
        <dbReference type="EC" id="2.3.1.255"/>
    </reaction>
</comment>
<comment type="subunit">
    <text evidence="1">Oligomer.</text>
</comment>
<comment type="subcellular location">
    <subcellularLocation>
        <location evidence="5">Plastid</location>
        <location evidence="5">Chloroplast</location>
    </subcellularLocation>
</comment>
<comment type="alternative products">
    <event type="alternative splicing"/>
    <isoform>
        <id>Q94AC8-1</id>
        <name>1</name>
        <sequence type="displayed"/>
    </isoform>
    <isoform>
        <id>Q94AC8-2</id>
        <name>2</name>
        <sequence type="described" ref="VSP_061874"/>
    </isoform>
</comment>
<comment type="tissue specificity">
    <text evidence="5">Expressed in green tissues.</text>
</comment>
<comment type="PTM">
    <text evidence="5">Autoacetylated.</text>
</comment>
<comment type="similarity">
    <text evidence="7">Belongs to the acetyltransferase family. GNAT subfamily.</text>
</comment>
<comment type="sequence caution" evidence="7">
    <conflict type="erroneous gene model prediction">
        <sequence resource="EMBL-CDS" id="CAB36772"/>
    </conflict>
</comment>
<comment type="sequence caution" evidence="7">
    <conflict type="erroneous gene model prediction">
        <sequence resource="EMBL-CDS" id="CAB79605"/>
    </conflict>
</comment>
<gene>
    <name evidence="6" type="primary">GNAT7</name>
    <name evidence="8" type="ordered locus">At4g28030</name>
    <name evidence="9" type="ORF">T13J8.140</name>
</gene>